<dbReference type="EMBL" id="Y10524">
    <property type="protein sequence ID" value="CAA71548.1"/>
    <property type="molecule type" value="Genomic_DNA"/>
</dbReference>
<dbReference type="PIR" id="T11440">
    <property type="entry name" value="T11440"/>
</dbReference>
<dbReference type="RefSeq" id="NP_007406.1">
    <property type="nucleotide sequence ID" value="NC_001794.1"/>
</dbReference>
<dbReference type="SMR" id="P92671"/>
<dbReference type="GeneID" id="808076"/>
<dbReference type="CTD" id="4519"/>
<dbReference type="GO" id="GO:0005743">
    <property type="term" value="C:mitochondrial inner membrane"/>
    <property type="evidence" value="ECO:0007669"/>
    <property type="project" value="UniProtKB-SubCell"/>
</dbReference>
<dbReference type="GO" id="GO:0045275">
    <property type="term" value="C:respiratory chain complex III"/>
    <property type="evidence" value="ECO:0007669"/>
    <property type="project" value="InterPro"/>
</dbReference>
<dbReference type="GO" id="GO:0046872">
    <property type="term" value="F:metal ion binding"/>
    <property type="evidence" value="ECO:0007669"/>
    <property type="project" value="UniProtKB-KW"/>
</dbReference>
<dbReference type="GO" id="GO:0008121">
    <property type="term" value="F:ubiquinol-cytochrome-c reductase activity"/>
    <property type="evidence" value="ECO:0007669"/>
    <property type="project" value="InterPro"/>
</dbReference>
<dbReference type="GO" id="GO:0006122">
    <property type="term" value="P:mitochondrial electron transport, ubiquinol to cytochrome c"/>
    <property type="evidence" value="ECO:0007669"/>
    <property type="project" value="TreeGrafter"/>
</dbReference>
<dbReference type="CDD" id="cd00290">
    <property type="entry name" value="cytochrome_b_C"/>
    <property type="match status" value="1"/>
</dbReference>
<dbReference type="CDD" id="cd00284">
    <property type="entry name" value="Cytochrome_b_N"/>
    <property type="match status" value="1"/>
</dbReference>
<dbReference type="FunFam" id="1.20.810.10:FF:000002">
    <property type="entry name" value="Cytochrome b"/>
    <property type="match status" value="1"/>
</dbReference>
<dbReference type="Gene3D" id="1.20.810.10">
    <property type="entry name" value="Cytochrome Bc1 Complex, Chain C"/>
    <property type="match status" value="1"/>
</dbReference>
<dbReference type="InterPro" id="IPR005798">
    <property type="entry name" value="Cyt_b/b6_C"/>
</dbReference>
<dbReference type="InterPro" id="IPR036150">
    <property type="entry name" value="Cyt_b/b6_C_sf"/>
</dbReference>
<dbReference type="InterPro" id="IPR005797">
    <property type="entry name" value="Cyt_b/b6_N"/>
</dbReference>
<dbReference type="InterPro" id="IPR027387">
    <property type="entry name" value="Cytb/b6-like_sf"/>
</dbReference>
<dbReference type="InterPro" id="IPR030689">
    <property type="entry name" value="Cytochrome_b"/>
</dbReference>
<dbReference type="InterPro" id="IPR048260">
    <property type="entry name" value="Cytochrome_b_C_euk/bac"/>
</dbReference>
<dbReference type="InterPro" id="IPR048259">
    <property type="entry name" value="Cytochrome_b_N_euk/bac"/>
</dbReference>
<dbReference type="InterPro" id="IPR016174">
    <property type="entry name" value="Di-haem_cyt_TM"/>
</dbReference>
<dbReference type="PANTHER" id="PTHR19271">
    <property type="entry name" value="CYTOCHROME B"/>
    <property type="match status" value="1"/>
</dbReference>
<dbReference type="PANTHER" id="PTHR19271:SF16">
    <property type="entry name" value="CYTOCHROME B"/>
    <property type="match status" value="1"/>
</dbReference>
<dbReference type="Pfam" id="PF00032">
    <property type="entry name" value="Cytochrom_B_C"/>
    <property type="match status" value="1"/>
</dbReference>
<dbReference type="Pfam" id="PF00033">
    <property type="entry name" value="Cytochrome_B"/>
    <property type="match status" value="1"/>
</dbReference>
<dbReference type="PIRSF" id="PIRSF038885">
    <property type="entry name" value="COB"/>
    <property type="match status" value="1"/>
</dbReference>
<dbReference type="SUPFAM" id="SSF81648">
    <property type="entry name" value="a domain/subunit of cytochrome bc1 complex (Ubiquinol-cytochrome c reductase)"/>
    <property type="match status" value="1"/>
</dbReference>
<dbReference type="SUPFAM" id="SSF81342">
    <property type="entry name" value="Transmembrane di-heme cytochromes"/>
    <property type="match status" value="1"/>
</dbReference>
<dbReference type="PROSITE" id="PS51003">
    <property type="entry name" value="CYTB_CTER"/>
    <property type="match status" value="1"/>
</dbReference>
<dbReference type="PROSITE" id="PS51002">
    <property type="entry name" value="CYTB_NTER"/>
    <property type="match status" value="1"/>
</dbReference>
<comment type="function">
    <text evidence="2">Component of the ubiquinol-cytochrome c reductase complex (complex III or cytochrome b-c1 complex) that is part of the mitochondrial respiratory chain. The b-c1 complex mediates electron transfer from ubiquinol to cytochrome c. Contributes to the generation of a proton gradient across the mitochondrial membrane that is then used for ATP synthesis.</text>
</comment>
<comment type="cofactor">
    <cofactor evidence="2">
        <name>heme b</name>
        <dbReference type="ChEBI" id="CHEBI:60344"/>
    </cofactor>
    <text evidence="2">Binds 2 heme b groups non-covalently.</text>
</comment>
<comment type="subunit">
    <text evidence="2">The cytochrome bc1 complex contains 11 subunits: 3 respiratory subunits (MT-CYB, CYC1 and UQCRFS1), 2 core proteins (UQCRC1 and UQCRC2) and 6 low-molecular weight proteins (UQCRH/QCR6, UQCRB/QCR7, UQCRQ/QCR8, UQCR10/QCR9, UQCR11/QCR10 and a cleavage product of UQCRFS1). This cytochrome bc1 complex then forms a dimer.</text>
</comment>
<comment type="subcellular location">
    <subcellularLocation>
        <location evidence="2">Mitochondrion inner membrane</location>
        <topology evidence="2">Multi-pass membrane protein</topology>
    </subcellularLocation>
</comment>
<comment type="miscellaneous">
    <text evidence="1">Heme 1 (or BL or b562) is low-potential and absorbs at about 562 nm, and heme 2 (or BH or b566) is high-potential and absorbs at about 566 nm.</text>
</comment>
<comment type="similarity">
    <text evidence="3 4">Belongs to the cytochrome b family.</text>
</comment>
<comment type="caution">
    <text evidence="2">The full-length protein contains only eight transmembrane helices, not nine as predicted by bioinformatics tools.</text>
</comment>
<sequence length="381" mass="42846">MTNLRKSHPLIKIVNHSFIDLPAPSNISAWWNFGSLLGACLIIQILTGLFLAMHYTSDTLTAFSSVAHICRDVNYGWLIRNLHANGASMFFMCLFLHVGRGIYYGSYLYKETWNIGVILLLTVMATAFVGYVLPWGQMSFWGATVITNLLSAIPYVGTTLVEWIWGGFSVDKATLTRFFAFHFILPFIITALVLVHLLFLHETGSNNPSGINPDSDKIPFHPYYTIKDALGLMLMLFILLMLALFSPDMLGDPDNFSPANPLSTPPHIKPEWYFLFAYAILRSIPNKLGGVLALLASILILLIIPLLHTSKQRSLMFRPISQTLFWILTANLITLTWIGGQPVEQPFIIIGQLASISYFLLIIILMPLAGLFENYMLEPKW</sequence>
<geneLocation type="mitochondrion"/>
<reference key="1">
    <citation type="journal article" date="1997" name="Proc. Natl. Acad. Sci. U.S.A.">
        <title>The complete mitochondrial genome of the wallaroo (Macropus robustus) and the phylogenetic relationship among Monotremata, Marsupialia, and Eutheria.</title>
        <authorList>
            <person name="Janke A."/>
            <person name="Xu X."/>
            <person name="Arnason U."/>
        </authorList>
    </citation>
    <scope>NUCLEOTIDE SEQUENCE [GENOMIC DNA]</scope>
</reference>
<organism>
    <name type="scientific">Osphranter robustus</name>
    <name type="common">Wallaroo</name>
    <name type="synonym">Macropus robustus</name>
    <dbReference type="NCBI Taxonomy" id="9319"/>
    <lineage>
        <taxon>Eukaryota</taxon>
        <taxon>Metazoa</taxon>
        <taxon>Chordata</taxon>
        <taxon>Craniata</taxon>
        <taxon>Vertebrata</taxon>
        <taxon>Euteleostomi</taxon>
        <taxon>Mammalia</taxon>
        <taxon>Metatheria</taxon>
        <taxon>Diprotodontia</taxon>
        <taxon>Macropodidae</taxon>
        <taxon>Osphranter</taxon>
    </lineage>
</organism>
<name>CYB_OSPRO</name>
<gene>
    <name type="primary">MT-CYB</name>
    <name type="synonym">COB</name>
    <name type="synonym">CYTB</name>
    <name type="synonym">MTCYB</name>
</gene>
<evidence type="ECO:0000250" key="1"/>
<evidence type="ECO:0000250" key="2">
    <source>
        <dbReference type="UniProtKB" id="P00157"/>
    </source>
</evidence>
<evidence type="ECO:0000255" key="3">
    <source>
        <dbReference type="PROSITE-ProRule" id="PRU00967"/>
    </source>
</evidence>
<evidence type="ECO:0000255" key="4">
    <source>
        <dbReference type="PROSITE-ProRule" id="PRU00968"/>
    </source>
</evidence>
<feature type="chain" id="PRO_0000061145" description="Cytochrome b">
    <location>
        <begin position="1"/>
        <end position="381"/>
    </location>
</feature>
<feature type="transmembrane region" description="Helical" evidence="2">
    <location>
        <begin position="33"/>
        <end position="53"/>
    </location>
</feature>
<feature type="transmembrane region" description="Helical" evidence="2">
    <location>
        <begin position="77"/>
        <end position="98"/>
    </location>
</feature>
<feature type="transmembrane region" description="Helical" evidence="2">
    <location>
        <begin position="113"/>
        <end position="133"/>
    </location>
</feature>
<feature type="transmembrane region" description="Helical" evidence="2">
    <location>
        <begin position="178"/>
        <end position="198"/>
    </location>
</feature>
<feature type="transmembrane region" description="Helical" evidence="2">
    <location>
        <begin position="226"/>
        <end position="246"/>
    </location>
</feature>
<feature type="transmembrane region" description="Helical" evidence="2">
    <location>
        <begin position="288"/>
        <end position="308"/>
    </location>
</feature>
<feature type="transmembrane region" description="Helical" evidence="2">
    <location>
        <begin position="320"/>
        <end position="340"/>
    </location>
</feature>
<feature type="transmembrane region" description="Helical" evidence="2">
    <location>
        <begin position="347"/>
        <end position="367"/>
    </location>
</feature>
<feature type="binding site" description="axial binding residue" evidence="2">
    <location>
        <position position="83"/>
    </location>
    <ligand>
        <name>heme b</name>
        <dbReference type="ChEBI" id="CHEBI:60344"/>
        <label>b562</label>
    </ligand>
    <ligandPart>
        <name>Fe</name>
        <dbReference type="ChEBI" id="CHEBI:18248"/>
    </ligandPart>
</feature>
<feature type="binding site" description="axial binding residue" evidence="2">
    <location>
        <position position="97"/>
    </location>
    <ligand>
        <name>heme b</name>
        <dbReference type="ChEBI" id="CHEBI:60344"/>
        <label>b566</label>
    </ligand>
    <ligandPart>
        <name>Fe</name>
        <dbReference type="ChEBI" id="CHEBI:18248"/>
    </ligandPart>
</feature>
<feature type="binding site" description="axial binding residue" evidence="2">
    <location>
        <position position="182"/>
    </location>
    <ligand>
        <name>heme b</name>
        <dbReference type="ChEBI" id="CHEBI:60344"/>
        <label>b562</label>
    </ligand>
    <ligandPart>
        <name>Fe</name>
        <dbReference type="ChEBI" id="CHEBI:18248"/>
    </ligandPart>
</feature>
<feature type="binding site" description="axial binding residue" evidence="2">
    <location>
        <position position="196"/>
    </location>
    <ligand>
        <name>heme b</name>
        <dbReference type="ChEBI" id="CHEBI:60344"/>
        <label>b566</label>
    </ligand>
    <ligandPart>
        <name>Fe</name>
        <dbReference type="ChEBI" id="CHEBI:18248"/>
    </ligandPart>
</feature>
<feature type="binding site" evidence="2">
    <location>
        <position position="201"/>
    </location>
    <ligand>
        <name>a ubiquinone</name>
        <dbReference type="ChEBI" id="CHEBI:16389"/>
    </ligand>
</feature>
<protein>
    <recommendedName>
        <fullName>Cytochrome b</fullName>
    </recommendedName>
    <alternativeName>
        <fullName>Complex III subunit 3</fullName>
    </alternativeName>
    <alternativeName>
        <fullName>Complex III subunit III</fullName>
    </alternativeName>
    <alternativeName>
        <fullName>Cytochrome b-c1 complex subunit 3</fullName>
    </alternativeName>
    <alternativeName>
        <fullName>Ubiquinol-cytochrome-c reductase complex cytochrome b subunit</fullName>
    </alternativeName>
</protein>
<keyword id="KW-0249">Electron transport</keyword>
<keyword id="KW-0349">Heme</keyword>
<keyword id="KW-0408">Iron</keyword>
<keyword id="KW-0472">Membrane</keyword>
<keyword id="KW-0479">Metal-binding</keyword>
<keyword id="KW-0496">Mitochondrion</keyword>
<keyword id="KW-0999">Mitochondrion inner membrane</keyword>
<keyword id="KW-0679">Respiratory chain</keyword>
<keyword id="KW-0812">Transmembrane</keyword>
<keyword id="KW-1133">Transmembrane helix</keyword>
<keyword id="KW-0813">Transport</keyword>
<keyword id="KW-0830">Ubiquinone</keyword>
<accession>P92671</accession>
<proteinExistence type="inferred from homology"/>